<protein>
    <recommendedName>
        <fullName evidence="1">ATP synthase subunit delta</fullName>
    </recommendedName>
    <alternativeName>
        <fullName evidence="1">ATP synthase F(1) sector subunit delta</fullName>
    </alternativeName>
    <alternativeName>
        <fullName evidence="1">F-type ATPase subunit delta</fullName>
        <shortName evidence="1">F-ATPase subunit delta</shortName>
    </alternativeName>
</protein>
<feature type="chain" id="PRO_0000382101" description="ATP synthase subunit delta">
    <location>
        <begin position="1"/>
        <end position="198"/>
    </location>
</feature>
<reference key="1">
    <citation type="journal article" date="2009" name="BMC Genomics">
        <title>Complete genome sequence of the sugarcane nitrogen-fixing endophyte Gluconacetobacter diazotrophicus Pal5.</title>
        <authorList>
            <person name="Bertalan M."/>
            <person name="Albano R."/>
            <person name="de Padua V."/>
            <person name="Rouws L."/>
            <person name="Rojas C."/>
            <person name="Hemerly A."/>
            <person name="Teixeira K."/>
            <person name="Schwab S."/>
            <person name="Araujo J."/>
            <person name="Oliveira A."/>
            <person name="Franca L."/>
            <person name="Magalhaes V."/>
            <person name="Alqueres S."/>
            <person name="Cardoso A."/>
            <person name="Almeida W."/>
            <person name="Loureiro M.M."/>
            <person name="Nogueira E."/>
            <person name="Cidade D."/>
            <person name="Oliveira D."/>
            <person name="Simao T."/>
            <person name="Macedo J."/>
            <person name="Valadao A."/>
            <person name="Dreschsel M."/>
            <person name="Freitas F."/>
            <person name="Vidal M."/>
            <person name="Guedes H."/>
            <person name="Rodrigues E."/>
            <person name="Meneses C."/>
            <person name="Brioso P."/>
            <person name="Pozzer L."/>
            <person name="Figueiredo D."/>
            <person name="Montano H."/>
            <person name="Junior J."/>
            <person name="de Souza Filho G."/>
            <person name="Martin Quintana Flores V."/>
            <person name="Ferreira B."/>
            <person name="Branco A."/>
            <person name="Gonzalez P."/>
            <person name="Guillobel H."/>
            <person name="Lemos M."/>
            <person name="Seibel L."/>
            <person name="Macedo J."/>
            <person name="Alves-Ferreira M."/>
            <person name="Sachetto-Martins G."/>
            <person name="Coelho A."/>
            <person name="Santos E."/>
            <person name="Amaral G."/>
            <person name="Neves A."/>
            <person name="Pacheco A.B."/>
            <person name="Carvalho D."/>
            <person name="Lery L."/>
            <person name="Bisch P."/>
            <person name="Rossle S.C."/>
            <person name="Urmenyi T."/>
            <person name="Rael Pereira A."/>
            <person name="Silva R."/>
            <person name="Rondinelli E."/>
            <person name="von Kruger W."/>
            <person name="Martins O."/>
            <person name="Baldani J.I."/>
            <person name="Ferreira P.C."/>
        </authorList>
    </citation>
    <scope>NUCLEOTIDE SEQUENCE [LARGE SCALE GENOMIC DNA]</scope>
    <source>
        <strain>ATCC 49037 / DSM 5601 / CCUG 37298 / CIP 103539 / LMG 7603 / PAl5</strain>
    </source>
</reference>
<reference key="2">
    <citation type="journal article" date="2010" name="Stand. Genomic Sci.">
        <title>Two genome sequences of the same bacterial strain, Gluconacetobacter diazotrophicus PAl 5, suggest a new standard in genome sequence submission.</title>
        <authorList>
            <person name="Giongo A."/>
            <person name="Tyler H.L."/>
            <person name="Zipperer U.N."/>
            <person name="Triplett E.W."/>
        </authorList>
    </citation>
    <scope>NUCLEOTIDE SEQUENCE [LARGE SCALE GENOMIC DNA]</scope>
    <source>
        <strain>ATCC 49037 / DSM 5601 / CCUG 37298 / CIP 103539 / LMG 7603 / PAl5</strain>
    </source>
</reference>
<keyword id="KW-0066">ATP synthesis</keyword>
<keyword id="KW-0997">Cell inner membrane</keyword>
<keyword id="KW-1003">Cell membrane</keyword>
<keyword id="KW-0139">CF(1)</keyword>
<keyword id="KW-0375">Hydrogen ion transport</keyword>
<keyword id="KW-0406">Ion transport</keyword>
<keyword id="KW-0472">Membrane</keyword>
<keyword id="KW-1185">Reference proteome</keyword>
<keyword id="KW-0813">Transport</keyword>
<comment type="function">
    <text evidence="1">F(1)F(0) ATP synthase produces ATP from ADP in the presence of a proton or sodium gradient. F-type ATPases consist of two structural domains, F(1) containing the extramembraneous catalytic core and F(0) containing the membrane proton channel, linked together by a central stalk and a peripheral stalk. During catalysis, ATP synthesis in the catalytic domain of F(1) is coupled via a rotary mechanism of the central stalk subunits to proton translocation.</text>
</comment>
<comment type="function">
    <text evidence="1">This protein is part of the stalk that links CF(0) to CF(1). It either transmits conformational changes from CF(0) to CF(1) or is implicated in proton conduction.</text>
</comment>
<comment type="subunit">
    <text evidence="1">F-type ATPases have 2 components, F(1) - the catalytic core - and F(0) - the membrane proton channel. F(1) has five subunits: alpha(3), beta(3), gamma(1), delta(1), epsilon(1). F(0) has three main subunits: a(1), b(2) and c(10-14). The alpha and beta chains form an alternating ring which encloses part of the gamma chain. F(1) is attached to F(0) by a central stalk formed by the gamma and epsilon chains, while a peripheral stalk is formed by the delta and b chains.</text>
</comment>
<comment type="subcellular location">
    <subcellularLocation>
        <location evidence="1">Cell inner membrane</location>
        <topology evidence="1">Peripheral membrane protein</topology>
    </subcellularLocation>
</comment>
<comment type="similarity">
    <text evidence="1">Belongs to the ATPase delta chain family.</text>
</comment>
<evidence type="ECO:0000255" key="1">
    <source>
        <dbReference type="HAMAP-Rule" id="MF_01416"/>
    </source>
</evidence>
<organism>
    <name type="scientific">Gluconacetobacter diazotrophicus (strain ATCC 49037 / DSM 5601 / CCUG 37298 / CIP 103539 / LMG 7603 / PAl5)</name>
    <dbReference type="NCBI Taxonomy" id="272568"/>
    <lineage>
        <taxon>Bacteria</taxon>
        <taxon>Pseudomonadati</taxon>
        <taxon>Pseudomonadota</taxon>
        <taxon>Alphaproteobacteria</taxon>
        <taxon>Acetobacterales</taxon>
        <taxon>Acetobacteraceae</taxon>
        <taxon>Gluconacetobacter</taxon>
    </lineage>
</organism>
<dbReference type="EMBL" id="CP001189">
    <property type="protein sequence ID" value="ACI51098.1"/>
    <property type="molecule type" value="Genomic_DNA"/>
</dbReference>
<dbReference type="EMBL" id="AM889285">
    <property type="protein sequence ID" value="CAP54636.1"/>
    <property type="molecule type" value="Genomic_DNA"/>
</dbReference>
<dbReference type="RefSeq" id="WP_012223285.1">
    <property type="nucleotide sequence ID" value="NC_010125.1"/>
</dbReference>
<dbReference type="SMR" id="A9H9A1"/>
<dbReference type="STRING" id="272568.GDI0693"/>
<dbReference type="KEGG" id="gdi:GDI0693"/>
<dbReference type="KEGG" id="gdj:Gdia_1316"/>
<dbReference type="eggNOG" id="COG0712">
    <property type="taxonomic scope" value="Bacteria"/>
</dbReference>
<dbReference type="HOGENOM" id="CLU_085114_0_1_5"/>
<dbReference type="OrthoDB" id="9796185at2"/>
<dbReference type="Proteomes" id="UP000001176">
    <property type="component" value="Chromosome"/>
</dbReference>
<dbReference type="GO" id="GO:0005886">
    <property type="term" value="C:plasma membrane"/>
    <property type="evidence" value="ECO:0007669"/>
    <property type="project" value="UniProtKB-SubCell"/>
</dbReference>
<dbReference type="GO" id="GO:0045259">
    <property type="term" value="C:proton-transporting ATP synthase complex"/>
    <property type="evidence" value="ECO:0007669"/>
    <property type="project" value="UniProtKB-KW"/>
</dbReference>
<dbReference type="GO" id="GO:0046933">
    <property type="term" value="F:proton-transporting ATP synthase activity, rotational mechanism"/>
    <property type="evidence" value="ECO:0007669"/>
    <property type="project" value="UniProtKB-UniRule"/>
</dbReference>
<dbReference type="Gene3D" id="1.10.520.20">
    <property type="entry name" value="N-terminal domain of the delta subunit of the F1F0-ATP synthase"/>
    <property type="match status" value="1"/>
</dbReference>
<dbReference type="HAMAP" id="MF_01416">
    <property type="entry name" value="ATP_synth_delta_bact"/>
    <property type="match status" value="1"/>
</dbReference>
<dbReference type="InterPro" id="IPR026015">
    <property type="entry name" value="ATP_synth_OSCP/delta_N_sf"/>
</dbReference>
<dbReference type="InterPro" id="IPR020781">
    <property type="entry name" value="ATPase_OSCP/d_CS"/>
</dbReference>
<dbReference type="InterPro" id="IPR000711">
    <property type="entry name" value="ATPase_OSCP/dsu"/>
</dbReference>
<dbReference type="NCBIfam" id="TIGR01145">
    <property type="entry name" value="ATP_synt_delta"/>
    <property type="match status" value="1"/>
</dbReference>
<dbReference type="PANTHER" id="PTHR11910">
    <property type="entry name" value="ATP SYNTHASE DELTA CHAIN"/>
    <property type="match status" value="1"/>
</dbReference>
<dbReference type="Pfam" id="PF00213">
    <property type="entry name" value="OSCP"/>
    <property type="match status" value="1"/>
</dbReference>
<dbReference type="PRINTS" id="PR00125">
    <property type="entry name" value="ATPASEDELTA"/>
</dbReference>
<dbReference type="SUPFAM" id="SSF47928">
    <property type="entry name" value="N-terminal domain of the delta subunit of the F1F0-ATP synthase"/>
    <property type="match status" value="1"/>
</dbReference>
<dbReference type="PROSITE" id="PS00389">
    <property type="entry name" value="ATPASE_DELTA"/>
    <property type="match status" value="1"/>
</dbReference>
<sequence length="198" mass="21344">MERPTVVSGGTTTISIASVANGLPGRYATALYELAADRWLLNEVLPQAEALRGLIDGNADFRALLSDRTLDIKDITRALLAVLDAQGFGATIRHFVGVIARNRRLSQLPAILDALRAIAAAKRGEEVAEVVSAQPLTDLQRVQLQSRLAEAGYSRVNIQERVDAALLGGLVVRVGARLYDTSLRSRLTRLHHAMKGAA</sequence>
<accession>A9H9A1</accession>
<name>ATPD_GLUDA</name>
<proteinExistence type="inferred from homology"/>
<gene>
    <name evidence="1" type="primary">atpH</name>
    <name type="ordered locus">GDI0693</name>
    <name type="ordered locus">Gdia_1316</name>
</gene>